<keyword id="KW-0046">Antibiotic resistance</keyword>
<keyword id="KW-0378">Hydrolase</keyword>
<keyword id="KW-0614">Plasmid</keyword>
<keyword id="KW-0732">Signal</keyword>
<keyword id="KW-0814">Transposable element</keyword>
<gene>
    <name type="primary">bla</name>
    <name type="synonym">oxa9</name>
</gene>
<proteinExistence type="inferred from homology"/>
<feature type="signal peptide" evidence="2">
    <location>
        <begin position="1"/>
        <end position="24"/>
    </location>
</feature>
<feature type="chain" id="PRO_0000017036" description="Beta-lactamase OXA-9">
    <location>
        <begin position="25"/>
        <end position="274"/>
    </location>
</feature>
<feature type="active site" description="Acyl-ester intermediate" evidence="3">
    <location>
        <position position="58"/>
    </location>
</feature>
<feature type="binding site" evidence="1">
    <location>
        <begin position="206"/>
        <end position="208"/>
    </location>
    <ligand>
        <name>substrate</name>
    </ligand>
</feature>
<feature type="modified residue" description="N6-carboxylysine" evidence="1">
    <location>
        <position position="61"/>
    </location>
</feature>
<accession>P0A3M3</accession>
<accession>P22070</accession>
<accession>Q7WWR7</accession>
<name>BLO9_KLEPN</name>
<organism>
    <name type="scientific">Klebsiella pneumoniae</name>
    <dbReference type="NCBI Taxonomy" id="573"/>
    <lineage>
        <taxon>Bacteria</taxon>
        <taxon>Pseudomonadati</taxon>
        <taxon>Pseudomonadota</taxon>
        <taxon>Gammaproteobacteria</taxon>
        <taxon>Enterobacterales</taxon>
        <taxon>Enterobacteriaceae</taxon>
        <taxon>Klebsiella/Raoultella group</taxon>
        <taxon>Klebsiella</taxon>
        <taxon>Klebsiella pneumoniae complex</taxon>
    </lineage>
</organism>
<evidence type="ECO:0000250" key="1"/>
<evidence type="ECO:0000255" key="2"/>
<evidence type="ECO:0000255" key="3">
    <source>
        <dbReference type="PROSITE-ProRule" id="PRU10103"/>
    </source>
</evidence>
<evidence type="ECO:0000269" key="4">
    <source>
    </source>
</evidence>
<evidence type="ECO:0000305" key="5"/>
<protein>
    <recommendedName>
        <fullName>Beta-lactamase OXA-9</fullName>
        <ecNumber>3.5.2.6</ecNumber>
    </recommendedName>
    <alternativeName>
        <fullName>Oxacillinase</fullName>
    </alternativeName>
    <alternativeName>
        <fullName>Penicillinase</fullName>
    </alternativeName>
</protein>
<comment type="function">
    <text evidence="4">Oxacillin-hydrolyzing beta-lactamase. Confers resistance to beta-lactam antibiotics but at a significantly lower level than the TEM bla gene product.</text>
</comment>
<comment type="catalytic activity">
    <reaction evidence="3">
        <text>a beta-lactam + H2O = a substituted beta-amino acid</text>
        <dbReference type="Rhea" id="RHEA:20401"/>
        <dbReference type="ChEBI" id="CHEBI:15377"/>
        <dbReference type="ChEBI" id="CHEBI:35627"/>
        <dbReference type="ChEBI" id="CHEBI:140347"/>
        <dbReference type="EC" id="3.5.2.6"/>
    </reaction>
</comment>
<comment type="similarity">
    <text evidence="5">Belongs to the class-D beta-lactamase family.</text>
</comment>
<geneLocation type="plasmid">
    <name>pJMCMW1</name>
</geneLocation>
<sequence length="274" mass="30568">MKKILLLHMLVFVSATLPISSVASDEVETLKCTIIADAITGNTLYETGECARRVSPCSSFKLPLAIMGFDSGILQSPKSPTWELKPEYNPSPRDRTYKQVYPALWQSDSVVWFSQQLTSRLGVDRFTEYVKKFEYGNQDVSGDSGKHNGLTQSWLMSSLTISPKEQIQFLLRFVAHKLPVSEAAYDMAYATIPQYQAAEGWAVHGKSGSGWLRDNNGKINESRPQGWFVGWAEKNGRQVVFARLEIGKEKSDIPGGSKAREDILVELPVLMGNK</sequence>
<reference key="1">
    <citation type="journal article" date="1990" name="Plasmid">
        <title>Sequencing and expression of aadA, bla, and tnpR from the multiresistance transposon Tn1331.</title>
        <authorList>
            <person name="Tolmasky M.E."/>
        </authorList>
    </citation>
    <scope>NUCLEOTIDE SEQUENCE [GENOMIC DNA]</scope>
    <source>
        <transposon>Tn1331</transposon>
    </source>
</reference>
<reference key="2">
    <citation type="submission" date="2002-11" db="EMBL/GenBank/DDBJ databases">
        <authorList>
            <person name="Tolmasky M.E."/>
        </authorList>
    </citation>
    <scope>SEQUENCE REVISION TO N-TERMINUS</scope>
</reference>
<reference key="3">
    <citation type="journal article" date="2002" name="Antimicrob. Agents Chemother.">
        <title>Complete nucleotide sequence of Klebsiella pneumoniae multiresistance plasmid pJHCMW1.</title>
        <authorList>
            <person name="Sarno R."/>
            <person name="McGillivary G."/>
            <person name="Sherratt D.J."/>
            <person name="Actis L.A."/>
            <person name="Tolmasky M.E."/>
        </authorList>
    </citation>
    <scope>NUCLEOTIDE SEQUENCE [GENOMIC DNA]</scope>
</reference>
<reference key="4">
    <citation type="journal article" date="1993" name="Plasmid">
        <title>Genetic organization of antibiotic resistance genes (aac(6')-Ib, aadA, and oxa9) in the multiresistance transposon Tn1331.</title>
        <authorList>
            <person name="Tolmasky M.E."/>
            <person name="Crosa J.H."/>
        </authorList>
    </citation>
    <scope>FUNCTION</scope>
</reference>
<dbReference type="EC" id="3.5.2.6"/>
<dbReference type="EMBL" id="M55547">
    <property type="protein sequence ID" value="AAA98406.2"/>
    <property type="molecule type" value="Genomic_DNA"/>
</dbReference>
<dbReference type="EMBL" id="AF479774">
    <property type="protein sequence ID" value="AAL93143.2"/>
    <property type="molecule type" value="Genomic_DNA"/>
</dbReference>
<dbReference type="PIR" id="D37392">
    <property type="entry name" value="D37392"/>
</dbReference>
<dbReference type="RefSeq" id="NP_608309.2">
    <property type="nucleotide sequence ID" value="NC_003486.1"/>
</dbReference>
<dbReference type="RefSeq" id="YP_007878590.1">
    <property type="nucleotide sequence ID" value="NC_021079.1"/>
</dbReference>
<dbReference type="RefSeq" id="YP_008603397.1">
    <property type="nucleotide sequence ID" value="NC_022520.1"/>
</dbReference>
<dbReference type="RefSeq" id="YP_009067787.1">
    <property type="nucleotide sequence ID" value="NC_025131.1"/>
</dbReference>
<dbReference type="RefSeq" id="YP_009071734.1">
    <property type="nucleotide sequence ID" value="NC_025185.1"/>
</dbReference>
<dbReference type="SMR" id="P0A3M3"/>
<dbReference type="CARD" id="ARO:3001404">
    <property type="molecule name" value="OXA-9"/>
    <property type="mechanism identifier" value="ARO:0001004"/>
    <property type="mechanism name" value="antibiotic inactivation"/>
</dbReference>
<dbReference type="KEGG" id="ag:AAA98406"/>
<dbReference type="GO" id="GO:0008800">
    <property type="term" value="F:beta-lactamase activity"/>
    <property type="evidence" value="ECO:0007669"/>
    <property type="project" value="UniProtKB-EC"/>
</dbReference>
<dbReference type="GO" id="GO:0008658">
    <property type="term" value="F:penicillin binding"/>
    <property type="evidence" value="ECO:0007669"/>
    <property type="project" value="InterPro"/>
</dbReference>
<dbReference type="GO" id="GO:0017001">
    <property type="term" value="P:antibiotic catabolic process"/>
    <property type="evidence" value="ECO:0007669"/>
    <property type="project" value="InterPro"/>
</dbReference>
<dbReference type="GO" id="GO:0046677">
    <property type="term" value="P:response to antibiotic"/>
    <property type="evidence" value="ECO:0007669"/>
    <property type="project" value="UniProtKB-KW"/>
</dbReference>
<dbReference type="Gene3D" id="3.40.710.10">
    <property type="entry name" value="DD-peptidase/beta-lactamase superfamily"/>
    <property type="match status" value="1"/>
</dbReference>
<dbReference type="InterPro" id="IPR012338">
    <property type="entry name" value="Beta-lactam/transpept-like"/>
</dbReference>
<dbReference type="InterPro" id="IPR002137">
    <property type="entry name" value="Beta-lactam_class-D_AS"/>
</dbReference>
<dbReference type="InterPro" id="IPR001460">
    <property type="entry name" value="PCN-bd_Tpept"/>
</dbReference>
<dbReference type="NCBIfam" id="NF000270">
    <property type="entry name" value="bla_class_D_alt"/>
    <property type="match status" value="1"/>
</dbReference>
<dbReference type="NCBIfam" id="NF040532">
    <property type="entry name" value="blaOXA-9_like"/>
    <property type="match status" value="1"/>
</dbReference>
<dbReference type="Pfam" id="PF00905">
    <property type="entry name" value="Transpeptidase"/>
    <property type="match status" value="1"/>
</dbReference>
<dbReference type="SUPFAM" id="SSF56601">
    <property type="entry name" value="beta-lactamase/transpeptidase-like"/>
    <property type="match status" value="1"/>
</dbReference>
<dbReference type="PROSITE" id="PS00337">
    <property type="entry name" value="BETA_LACTAMASE_D"/>
    <property type="match status" value="1"/>
</dbReference>